<reference key="1">
    <citation type="journal article" date="2001" name="Nature">
        <title>Genome sequence of Yersinia pestis, the causative agent of plague.</title>
        <authorList>
            <person name="Parkhill J."/>
            <person name="Wren B.W."/>
            <person name="Thomson N.R."/>
            <person name="Titball R.W."/>
            <person name="Holden M.T.G."/>
            <person name="Prentice M.B."/>
            <person name="Sebaihia M."/>
            <person name="James K.D."/>
            <person name="Churcher C.M."/>
            <person name="Mungall K.L."/>
            <person name="Baker S."/>
            <person name="Basham D."/>
            <person name="Bentley S.D."/>
            <person name="Brooks K."/>
            <person name="Cerdeno-Tarraga A.-M."/>
            <person name="Chillingworth T."/>
            <person name="Cronin A."/>
            <person name="Davies R.M."/>
            <person name="Davis P."/>
            <person name="Dougan G."/>
            <person name="Feltwell T."/>
            <person name="Hamlin N."/>
            <person name="Holroyd S."/>
            <person name="Jagels K."/>
            <person name="Karlyshev A.V."/>
            <person name="Leather S."/>
            <person name="Moule S."/>
            <person name="Oyston P.C.F."/>
            <person name="Quail M.A."/>
            <person name="Rutherford K.M."/>
            <person name="Simmonds M."/>
            <person name="Skelton J."/>
            <person name="Stevens K."/>
            <person name="Whitehead S."/>
            <person name="Barrell B.G."/>
        </authorList>
    </citation>
    <scope>NUCLEOTIDE SEQUENCE [LARGE SCALE GENOMIC DNA]</scope>
    <source>
        <strain>CO-92 / Biovar Orientalis</strain>
    </source>
</reference>
<reference key="2">
    <citation type="journal article" date="2002" name="J. Bacteriol.">
        <title>Genome sequence of Yersinia pestis KIM.</title>
        <authorList>
            <person name="Deng W."/>
            <person name="Burland V."/>
            <person name="Plunkett G. III"/>
            <person name="Boutin A."/>
            <person name="Mayhew G.F."/>
            <person name="Liss P."/>
            <person name="Perna N.T."/>
            <person name="Rose D.J."/>
            <person name="Mau B."/>
            <person name="Zhou S."/>
            <person name="Schwartz D.C."/>
            <person name="Fetherston J.D."/>
            <person name="Lindler L.E."/>
            <person name="Brubaker R.R."/>
            <person name="Plano G.V."/>
            <person name="Straley S.C."/>
            <person name="McDonough K.A."/>
            <person name="Nilles M.L."/>
            <person name="Matson J.S."/>
            <person name="Blattner F.R."/>
            <person name="Perry R.D."/>
        </authorList>
    </citation>
    <scope>NUCLEOTIDE SEQUENCE [LARGE SCALE GENOMIC DNA]</scope>
    <source>
        <strain>KIM10+ / Biovar Mediaevalis</strain>
    </source>
</reference>
<reference key="3">
    <citation type="journal article" date="2004" name="DNA Res.">
        <title>Complete genome sequence of Yersinia pestis strain 91001, an isolate avirulent to humans.</title>
        <authorList>
            <person name="Song Y."/>
            <person name="Tong Z."/>
            <person name="Wang J."/>
            <person name="Wang L."/>
            <person name="Guo Z."/>
            <person name="Han Y."/>
            <person name="Zhang J."/>
            <person name="Pei D."/>
            <person name="Zhou D."/>
            <person name="Qin H."/>
            <person name="Pang X."/>
            <person name="Han Y."/>
            <person name="Zhai J."/>
            <person name="Li M."/>
            <person name="Cui B."/>
            <person name="Qi Z."/>
            <person name="Jin L."/>
            <person name="Dai R."/>
            <person name="Chen F."/>
            <person name="Li S."/>
            <person name="Ye C."/>
            <person name="Du Z."/>
            <person name="Lin W."/>
            <person name="Wang J."/>
            <person name="Yu J."/>
            <person name="Yang H."/>
            <person name="Wang J."/>
            <person name="Huang P."/>
            <person name="Yang R."/>
        </authorList>
    </citation>
    <scope>NUCLEOTIDE SEQUENCE [LARGE SCALE GENOMIC DNA]</scope>
    <source>
        <strain>91001 / Biovar Mediaevalis</strain>
    </source>
</reference>
<proteinExistence type="inferred from homology"/>
<accession>Q8ZJB3</accession>
<accession>Q0WKA4</accession>
<gene>
    <name evidence="1" type="primary">fusA</name>
    <name type="ordered locus">YPO0202</name>
    <name type="ordered locus">y3985</name>
    <name type="ordered locus">YP_0201</name>
</gene>
<sequence length="702" mass="77537">MARKTPIERYRNIGISAHIDAGKTTTTERILFYTGVNHKIGEVHDGAATMDWMEQEQERGITITSAATTCFWSGMAKQFEPHHVNIIDTPGHVDFTIEVERSMRVLDGAVMVYCAVGGVQPQSETVWRQANKYKVPRIAFVNKMDRMGANFLRVVGQLKSRLGANPVPLQLAIGAEEKFTGIIDLVKMKAINWNEADQGVTFEYEEIPADMAELAAEWHQNLVESAAEASDELMDKYLGGEELTEEEIKKALRQRVLKSEIILVTCGSAFKNKGVQAMLDAVIEYLPAPTDVESINGILDDGKDTPAVRHSDDKEPFSALAFKIATDPFVGNLTFFRVYSGIVNSGDTVLNSVKSQRERLGRIVQMHANKREEIKEVHAGDIAAAIGLKDVTTGDTLCDPNNPIILERMEFPEPVISVAVEPKTKADQEKMGMALGRLAKEDPSFRVWTDEESGQTIIAGMGELHLDILVDRMRREFNVEANVGKPQVAYRETIRETVKDVEGKHAKQSGGRGQYGHVVIDMSPLPPGGVGYEFVNEIVGGSIPKEFIPAVDKGIQEQLKSGPLAGYPVVDVKVRLHYGSYHDVDSSELAFKLAGSIAFKEGFKRAKPVLLEPIMKVEVETPEDYMGDVMGDLNRRRGIIEGMEDTATGKTVRVKVPLSEMFGYATDLRSQTQGRASYSMEFLEYAEAPSNVAKAVIEARGK</sequence>
<name>EFG_YERPE</name>
<comment type="function">
    <text evidence="1">Catalyzes the GTP-dependent ribosomal translocation step during translation elongation. During this step, the ribosome changes from the pre-translocational (PRE) to the post-translocational (POST) state as the newly formed A-site-bound peptidyl-tRNA and P-site-bound deacylated tRNA move to the P and E sites, respectively. Catalyzes the coordinated movement of the two tRNA molecules, the mRNA and conformational changes in the ribosome.</text>
</comment>
<comment type="subcellular location">
    <subcellularLocation>
        <location evidence="1">Cytoplasm</location>
    </subcellularLocation>
</comment>
<comment type="similarity">
    <text evidence="1">Belongs to the TRAFAC class translation factor GTPase superfamily. Classic translation factor GTPase family. EF-G/EF-2 subfamily.</text>
</comment>
<dbReference type="EMBL" id="AL590842">
    <property type="protein sequence ID" value="CAL18886.1"/>
    <property type="molecule type" value="Genomic_DNA"/>
</dbReference>
<dbReference type="EMBL" id="AE009952">
    <property type="protein sequence ID" value="AAM87529.1"/>
    <property type="molecule type" value="Genomic_DNA"/>
</dbReference>
<dbReference type="EMBL" id="AE017042">
    <property type="protein sequence ID" value="AAS60477.1"/>
    <property type="molecule type" value="Genomic_DNA"/>
</dbReference>
<dbReference type="PIR" id="AD0025">
    <property type="entry name" value="AD0025"/>
</dbReference>
<dbReference type="RefSeq" id="WP_002212325.1">
    <property type="nucleotide sequence ID" value="NZ_WUCM01000004.1"/>
</dbReference>
<dbReference type="RefSeq" id="YP_002345284.1">
    <property type="nucleotide sequence ID" value="NC_003143.1"/>
</dbReference>
<dbReference type="SMR" id="Q8ZJB3"/>
<dbReference type="IntAct" id="Q8ZJB3">
    <property type="interactions" value="2"/>
</dbReference>
<dbReference type="STRING" id="214092.YPO0202"/>
<dbReference type="PaxDb" id="214092-YPO0202"/>
<dbReference type="DNASU" id="1148932"/>
<dbReference type="EnsemblBacteria" id="AAS60477">
    <property type="protein sequence ID" value="AAS60477"/>
    <property type="gene ID" value="YP_0201"/>
</dbReference>
<dbReference type="GeneID" id="96663201"/>
<dbReference type="KEGG" id="ype:YPO0202"/>
<dbReference type="KEGG" id="ypk:y3985"/>
<dbReference type="KEGG" id="ypm:YP_0201"/>
<dbReference type="PATRIC" id="fig|214092.21.peg.434"/>
<dbReference type="eggNOG" id="COG0480">
    <property type="taxonomic scope" value="Bacteria"/>
</dbReference>
<dbReference type="HOGENOM" id="CLU_002794_4_1_6"/>
<dbReference type="OMA" id="GQFAKVQ"/>
<dbReference type="OrthoDB" id="9804431at2"/>
<dbReference type="Proteomes" id="UP000000815">
    <property type="component" value="Chromosome"/>
</dbReference>
<dbReference type="Proteomes" id="UP000001019">
    <property type="component" value="Chromosome"/>
</dbReference>
<dbReference type="Proteomes" id="UP000002490">
    <property type="component" value="Chromosome"/>
</dbReference>
<dbReference type="GO" id="GO:0005829">
    <property type="term" value="C:cytosol"/>
    <property type="evidence" value="ECO:0000318"/>
    <property type="project" value="GO_Central"/>
</dbReference>
<dbReference type="GO" id="GO:0005525">
    <property type="term" value="F:GTP binding"/>
    <property type="evidence" value="ECO:0007669"/>
    <property type="project" value="UniProtKB-UniRule"/>
</dbReference>
<dbReference type="GO" id="GO:0003924">
    <property type="term" value="F:GTPase activity"/>
    <property type="evidence" value="ECO:0007669"/>
    <property type="project" value="InterPro"/>
</dbReference>
<dbReference type="GO" id="GO:0097216">
    <property type="term" value="F:guanosine tetraphosphate binding"/>
    <property type="evidence" value="ECO:0007669"/>
    <property type="project" value="UniProtKB-ARBA"/>
</dbReference>
<dbReference type="GO" id="GO:0003746">
    <property type="term" value="F:translation elongation factor activity"/>
    <property type="evidence" value="ECO:0007669"/>
    <property type="project" value="UniProtKB-UniRule"/>
</dbReference>
<dbReference type="GO" id="GO:0032790">
    <property type="term" value="P:ribosome disassembly"/>
    <property type="evidence" value="ECO:0000318"/>
    <property type="project" value="GO_Central"/>
</dbReference>
<dbReference type="CDD" id="cd01886">
    <property type="entry name" value="EF-G"/>
    <property type="match status" value="1"/>
</dbReference>
<dbReference type="CDD" id="cd16262">
    <property type="entry name" value="EFG_III"/>
    <property type="match status" value="1"/>
</dbReference>
<dbReference type="CDD" id="cd01434">
    <property type="entry name" value="EFG_mtEFG1_IV"/>
    <property type="match status" value="1"/>
</dbReference>
<dbReference type="CDD" id="cd03713">
    <property type="entry name" value="EFG_mtEFG_C"/>
    <property type="match status" value="1"/>
</dbReference>
<dbReference type="CDD" id="cd04088">
    <property type="entry name" value="EFG_mtEFG_II"/>
    <property type="match status" value="1"/>
</dbReference>
<dbReference type="FunFam" id="2.40.30.10:FF:000006">
    <property type="entry name" value="Elongation factor G"/>
    <property type="match status" value="1"/>
</dbReference>
<dbReference type="FunFam" id="3.30.230.10:FF:000003">
    <property type="entry name" value="Elongation factor G"/>
    <property type="match status" value="1"/>
</dbReference>
<dbReference type="FunFam" id="3.30.70.240:FF:000001">
    <property type="entry name" value="Elongation factor G"/>
    <property type="match status" value="1"/>
</dbReference>
<dbReference type="FunFam" id="3.30.70.870:FF:000001">
    <property type="entry name" value="Elongation factor G"/>
    <property type="match status" value="1"/>
</dbReference>
<dbReference type="FunFam" id="3.40.50.300:FF:000029">
    <property type="entry name" value="Elongation factor G"/>
    <property type="match status" value="1"/>
</dbReference>
<dbReference type="Gene3D" id="3.30.230.10">
    <property type="match status" value="1"/>
</dbReference>
<dbReference type="Gene3D" id="3.30.70.240">
    <property type="match status" value="1"/>
</dbReference>
<dbReference type="Gene3D" id="3.30.70.870">
    <property type="entry name" value="Elongation Factor G (Translational Gtpase), domain 3"/>
    <property type="match status" value="1"/>
</dbReference>
<dbReference type="Gene3D" id="3.40.50.300">
    <property type="entry name" value="P-loop containing nucleotide triphosphate hydrolases"/>
    <property type="match status" value="1"/>
</dbReference>
<dbReference type="Gene3D" id="2.40.30.10">
    <property type="entry name" value="Translation factors"/>
    <property type="match status" value="1"/>
</dbReference>
<dbReference type="HAMAP" id="MF_00054_B">
    <property type="entry name" value="EF_G_EF_2_B"/>
    <property type="match status" value="1"/>
</dbReference>
<dbReference type="InterPro" id="IPR041095">
    <property type="entry name" value="EFG_II"/>
</dbReference>
<dbReference type="InterPro" id="IPR009022">
    <property type="entry name" value="EFG_III"/>
</dbReference>
<dbReference type="InterPro" id="IPR035647">
    <property type="entry name" value="EFG_III/V"/>
</dbReference>
<dbReference type="InterPro" id="IPR047872">
    <property type="entry name" value="EFG_IV"/>
</dbReference>
<dbReference type="InterPro" id="IPR035649">
    <property type="entry name" value="EFG_V"/>
</dbReference>
<dbReference type="InterPro" id="IPR000640">
    <property type="entry name" value="EFG_V-like"/>
</dbReference>
<dbReference type="InterPro" id="IPR004161">
    <property type="entry name" value="EFTu-like_2"/>
</dbReference>
<dbReference type="InterPro" id="IPR031157">
    <property type="entry name" value="G_TR_CS"/>
</dbReference>
<dbReference type="InterPro" id="IPR027417">
    <property type="entry name" value="P-loop_NTPase"/>
</dbReference>
<dbReference type="InterPro" id="IPR020568">
    <property type="entry name" value="Ribosomal_Su5_D2-typ_SF"/>
</dbReference>
<dbReference type="InterPro" id="IPR014721">
    <property type="entry name" value="Ribsml_uS5_D2-typ_fold_subgr"/>
</dbReference>
<dbReference type="InterPro" id="IPR005225">
    <property type="entry name" value="Small_GTP-bd"/>
</dbReference>
<dbReference type="InterPro" id="IPR000795">
    <property type="entry name" value="T_Tr_GTP-bd_dom"/>
</dbReference>
<dbReference type="InterPro" id="IPR009000">
    <property type="entry name" value="Transl_B-barrel_sf"/>
</dbReference>
<dbReference type="InterPro" id="IPR004540">
    <property type="entry name" value="Transl_elong_EFG/EF2"/>
</dbReference>
<dbReference type="InterPro" id="IPR005517">
    <property type="entry name" value="Transl_elong_EFG/EF2_IV"/>
</dbReference>
<dbReference type="NCBIfam" id="TIGR00484">
    <property type="entry name" value="EF-G"/>
    <property type="match status" value="1"/>
</dbReference>
<dbReference type="NCBIfam" id="NF009381">
    <property type="entry name" value="PRK12740.1-5"/>
    <property type="match status" value="1"/>
</dbReference>
<dbReference type="NCBIfam" id="TIGR00231">
    <property type="entry name" value="small_GTP"/>
    <property type="match status" value="1"/>
</dbReference>
<dbReference type="PANTHER" id="PTHR43261:SF1">
    <property type="entry name" value="RIBOSOME-RELEASING FACTOR 2, MITOCHONDRIAL"/>
    <property type="match status" value="1"/>
</dbReference>
<dbReference type="PANTHER" id="PTHR43261">
    <property type="entry name" value="TRANSLATION ELONGATION FACTOR G-RELATED"/>
    <property type="match status" value="1"/>
</dbReference>
<dbReference type="Pfam" id="PF00679">
    <property type="entry name" value="EFG_C"/>
    <property type="match status" value="1"/>
</dbReference>
<dbReference type="Pfam" id="PF14492">
    <property type="entry name" value="EFG_III"/>
    <property type="match status" value="1"/>
</dbReference>
<dbReference type="Pfam" id="PF03764">
    <property type="entry name" value="EFG_IV"/>
    <property type="match status" value="1"/>
</dbReference>
<dbReference type="Pfam" id="PF00009">
    <property type="entry name" value="GTP_EFTU"/>
    <property type="match status" value="1"/>
</dbReference>
<dbReference type="Pfam" id="PF03144">
    <property type="entry name" value="GTP_EFTU_D2"/>
    <property type="match status" value="1"/>
</dbReference>
<dbReference type="PRINTS" id="PR00315">
    <property type="entry name" value="ELONGATNFCT"/>
</dbReference>
<dbReference type="SMART" id="SM00838">
    <property type="entry name" value="EFG_C"/>
    <property type="match status" value="1"/>
</dbReference>
<dbReference type="SMART" id="SM00889">
    <property type="entry name" value="EFG_IV"/>
    <property type="match status" value="1"/>
</dbReference>
<dbReference type="SUPFAM" id="SSF54980">
    <property type="entry name" value="EF-G C-terminal domain-like"/>
    <property type="match status" value="2"/>
</dbReference>
<dbReference type="SUPFAM" id="SSF52540">
    <property type="entry name" value="P-loop containing nucleoside triphosphate hydrolases"/>
    <property type="match status" value="1"/>
</dbReference>
<dbReference type="SUPFAM" id="SSF54211">
    <property type="entry name" value="Ribosomal protein S5 domain 2-like"/>
    <property type="match status" value="1"/>
</dbReference>
<dbReference type="SUPFAM" id="SSF50447">
    <property type="entry name" value="Translation proteins"/>
    <property type="match status" value="1"/>
</dbReference>
<dbReference type="PROSITE" id="PS00301">
    <property type="entry name" value="G_TR_1"/>
    <property type="match status" value="1"/>
</dbReference>
<dbReference type="PROSITE" id="PS51722">
    <property type="entry name" value="G_TR_2"/>
    <property type="match status" value="1"/>
</dbReference>
<organism>
    <name type="scientific">Yersinia pestis</name>
    <dbReference type="NCBI Taxonomy" id="632"/>
    <lineage>
        <taxon>Bacteria</taxon>
        <taxon>Pseudomonadati</taxon>
        <taxon>Pseudomonadota</taxon>
        <taxon>Gammaproteobacteria</taxon>
        <taxon>Enterobacterales</taxon>
        <taxon>Yersiniaceae</taxon>
        <taxon>Yersinia</taxon>
    </lineage>
</organism>
<feature type="chain" id="PRO_0000091273" description="Elongation factor G">
    <location>
        <begin position="1"/>
        <end position="702"/>
    </location>
</feature>
<feature type="domain" description="tr-type G">
    <location>
        <begin position="8"/>
        <end position="290"/>
    </location>
</feature>
<feature type="binding site" evidence="1">
    <location>
        <begin position="17"/>
        <end position="24"/>
    </location>
    <ligand>
        <name>GTP</name>
        <dbReference type="ChEBI" id="CHEBI:37565"/>
    </ligand>
</feature>
<feature type="binding site" evidence="1">
    <location>
        <begin position="88"/>
        <end position="92"/>
    </location>
    <ligand>
        <name>GTP</name>
        <dbReference type="ChEBI" id="CHEBI:37565"/>
    </ligand>
</feature>
<feature type="binding site" evidence="1">
    <location>
        <begin position="142"/>
        <end position="145"/>
    </location>
    <ligand>
        <name>GTP</name>
        <dbReference type="ChEBI" id="CHEBI:37565"/>
    </ligand>
</feature>
<evidence type="ECO:0000255" key="1">
    <source>
        <dbReference type="HAMAP-Rule" id="MF_00054"/>
    </source>
</evidence>
<keyword id="KW-0963">Cytoplasm</keyword>
<keyword id="KW-0251">Elongation factor</keyword>
<keyword id="KW-0342">GTP-binding</keyword>
<keyword id="KW-0547">Nucleotide-binding</keyword>
<keyword id="KW-0648">Protein biosynthesis</keyword>
<keyword id="KW-1185">Reference proteome</keyword>
<protein>
    <recommendedName>
        <fullName evidence="1">Elongation factor G</fullName>
        <shortName evidence="1">EF-G</shortName>
    </recommendedName>
</protein>